<sequence length="434" mass="46378">MQSEAQSPRSSQICSTEPVFGGHAPRRVSHAVDVRWGGTLVTIGGAAPVRVQSMTNTDTADAIGTAIQVKELANAGSELVRITVNTPEAAAAVPAIREQLDRMGVTVPLVGDFHYNGHLLLRDYPDCAQALSKYRINPGNVGQGAKRDSQFAQMIEAAIKYDKPVRIGVNWGSLDQDLLARMMDENGARAEPWEAQSVMYEALIQSAIGSAERAVELGLGRDKIVLSCKVSGVQDLVAVYRELSRRCGFALHLGLTEAGMGSKGIVASTAAIGLLLQEGIGDTIRISLTPEPGAPRTGEVVVGQEILQTMGLRSFAPMVVACPGCGRTTSTLFQELALRIQTYLREQMPVWRSEYPGVEKMNVAVMGCIVNGPGESKHANIGISLPGSGENPAAPVFVDGEKVKTLRGEHIAEEFQQIVSDYVARTYGRAAAQN</sequence>
<dbReference type="EC" id="1.17.7.3" evidence="1"/>
<dbReference type="EMBL" id="CP000010">
    <property type="protein sequence ID" value="AAU47558.1"/>
    <property type="molecule type" value="Genomic_DNA"/>
</dbReference>
<dbReference type="RefSeq" id="WP_004527159.1">
    <property type="nucleotide sequence ID" value="NC_006348.1"/>
</dbReference>
<dbReference type="RefSeq" id="YP_103005.1">
    <property type="nucleotide sequence ID" value="NC_006348.1"/>
</dbReference>
<dbReference type="SMR" id="Q62JW4"/>
<dbReference type="GeneID" id="92979078"/>
<dbReference type="KEGG" id="bma:BMA1345"/>
<dbReference type="PATRIC" id="fig|243160.12.peg.1384"/>
<dbReference type="eggNOG" id="COG0821">
    <property type="taxonomic scope" value="Bacteria"/>
</dbReference>
<dbReference type="HOGENOM" id="CLU_042258_1_0_4"/>
<dbReference type="UniPathway" id="UPA00056">
    <property type="reaction ID" value="UER00096"/>
</dbReference>
<dbReference type="Proteomes" id="UP000006693">
    <property type="component" value="Chromosome 1"/>
</dbReference>
<dbReference type="GO" id="GO:0051539">
    <property type="term" value="F:4 iron, 4 sulfur cluster binding"/>
    <property type="evidence" value="ECO:0007669"/>
    <property type="project" value="UniProtKB-UniRule"/>
</dbReference>
<dbReference type="GO" id="GO:0046429">
    <property type="term" value="F:4-hydroxy-3-methylbut-2-en-1-yl diphosphate synthase activity (ferredoxin)"/>
    <property type="evidence" value="ECO:0007669"/>
    <property type="project" value="UniProtKB-UniRule"/>
</dbReference>
<dbReference type="GO" id="GO:0141197">
    <property type="term" value="F:4-hydroxy-3-methylbut-2-enyl-diphosphate synthase activity (flavodoxin)"/>
    <property type="evidence" value="ECO:0007669"/>
    <property type="project" value="UniProtKB-EC"/>
</dbReference>
<dbReference type="GO" id="GO:0005506">
    <property type="term" value="F:iron ion binding"/>
    <property type="evidence" value="ECO:0007669"/>
    <property type="project" value="InterPro"/>
</dbReference>
<dbReference type="GO" id="GO:0019288">
    <property type="term" value="P:isopentenyl diphosphate biosynthetic process, methylerythritol 4-phosphate pathway"/>
    <property type="evidence" value="ECO:0007669"/>
    <property type="project" value="UniProtKB-UniRule"/>
</dbReference>
<dbReference type="GO" id="GO:0016114">
    <property type="term" value="P:terpenoid biosynthetic process"/>
    <property type="evidence" value="ECO:0007669"/>
    <property type="project" value="InterPro"/>
</dbReference>
<dbReference type="FunFam" id="3.30.413.10:FF:000012">
    <property type="entry name" value="4-hydroxy-3-methylbut-2-en-1-yl diphosphate synthase (flavodoxin)"/>
    <property type="match status" value="1"/>
</dbReference>
<dbReference type="Gene3D" id="3.20.20.20">
    <property type="entry name" value="Dihydropteroate synthase-like"/>
    <property type="match status" value="1"/>
</dbReference>
<dbReference type="Gene3D" id="3.30.413.10">
    <property type="entry name" value="Sulfite Reductase Hemoprotein, domain 1"/>
    <property type="match status" value="1"/>
</dbReference>
<dbReference type="HAMAP" id="MF_00159">
    <property type="entry name" value="IspG"/>
    <property type="match status" value="1"/>
</dbReference>
<dbReference type="InterPro" id="IPR011005">
    <property type="entry name" value="Dihydropteroate_synth-like_sf"/>
</dbReference>
<dbReference type="InterPro" id="IPR016425">
    <property type="entry name" value="IspG_bac"/>
</dbReference>
<dbReference type="InterPro" id="IPR004588">
    <property type="entry name" value="IspG_bac-typ"/>
</dbReference>
<dbReference type="InterPro" id="IPR045854">
    <property type="entry name" value="NO2/SO3_Rdtase_4Fe4S_sf"/>
</dbReference>
<dbReference type="NCBIfam" id="TIGR00612">
    <property type="entry name" value="ispG_gcpE"/>
    <property type="match status" value="1"/>
</dbReference>
<dbReference type="NCBIfam" id="NF001540">
    <property type="entry name" value="PRK00366.1"/>
    <property type="match status" value="1"/>
</dbReference>
<dbReference type="PANTHER" id="PTHR30454">
    <property type="entry name" value="4-HYDROXY-3-METHYLBUT-2-EN-1-YL DIPHOSPHATE SYNTHASE"/>
    <property type="match status" value="1"/>
</dbReference>
<dbReference type="PANTHER" id="PTHR30454:SF0">
    <property type="entry name" value="4-HYDROXY-3-METHYLBUT-2-EN-1-YL DIPHOSPHATE SYNTHASE (FERREDOXIN), CHLOROPLASTIC"/>
    <property type="match status" value="1"/>
</dbReference>
<dbReference type="Pfam" id="PF04551">
    <property type="entry name" value="GcpE"/>
    <property type="match status" value="1"/>
</dbReference>
<dbReference type="PIRSF" id="PIRSF004640">
    <property type="entry name" value="IspG"/>
    <property type="match status" value="1"/>
</dbReference>
<organism>
    <name type="scientific">Burkholderia mallei (strain ATCC 23344)</name>
    <dbReference type="NCBI Taxonomy" id="243160"/>
    <lineage>
        <taxon>Bacteria</taxon>
        <taxon>Pseudomonadati</taxon>
        <taxon>Pseudomonadota</taxon>
        <taxon>Betaproteobacteria</taxon>
        <taxon>Burkholderiales</taxon>
        <taxon>Burkholderiaceae</taxon>
        <taxon>Burkholderia</taxon>
        <taxon>pseudomallei group</taxon>
    </lineage>
</organism>
<protein>
    <recommendedName>
        <fullName evidence="1">4-hydroxy-3-methylbut-2-en-1-yl diphosphate synthase (flavodoxin)</fullName>
        <ecNumber evidence="1">1.17.7.3</ecNumber>
    </recommendedName>
    <alternativeName>
        <fullName evidence="1">1-hydroxy-2-methyl-2-(E)-butenyl 4-diphosphate synthase</fullName>
    </alternativeName>
</protein>
<keyword id="KW-0004">4Fe-4S</keyword>
<keyword id="KW-0408">Iron</keyword>
<keyword id="KW-0411">Iron-sulfur</keyword>
<keyword id="KW-0414">Isoprene biosynthesis</keyword>
<keyword id="KW-0479">Metal-binding</keyword>
<keyword id="KW-0560">Oxidoreductase</keyword>
<keyword id="KW-1185">Reference proteome</keyword>
<evidence type="ECO:0000255" key="1">
    <source>
        <dbReference type="HAMAP-Rule" id="MF_00159"/>
    </source>
</evidence>
<evidence type="ECO:0000256" key="2">
    <source>
        <dbReference type="SAM" id="MobiDB-lite"/>
    </source>
</evidence>
<comment type="function">
    <text evidence="1">Converts 2C-methyl-D-erythritol 2,4-cyclodiphosphate (ME-2,4cPP) into 1-hydroxy-2-methyl-2-(E)-butenyl 4-diphosphate.</text>
</comment>
<comment type="catalytic activity">
    <reaction evidence="1">
        <text>(2E)-4-hydroxy-3-methylbut-2-enyl diphosphate + oxidized [flavodoxin] + H2O + 2 H(+) = 2-C-methyl-D-erythritol 2,4-cyclic diphosphate + reduced [flavodoxin]</text>
        <dbReference type="Rhea" id="RHEA:43604"/>
        <dbReference type="Rhea" id="RHEA-COMP:10622"/>
        <dbReference type="Rhea" id="RHEA-COMP:10623"/>
        <dbReference type="ChEBI" id="CHEBI:15377"/>
        <dbReference type="ChEBI" id="CHEBI:15378"/>
        <dbReference type="ChEBI" id="CHEBI:57618"/>
        <dbReference type="ChEBI" id="CHEBI:58210"/>
        <dbReference type="ChEBI" id="CHEBI:58483"/>
        <dbReference type="ChEBI" id="CHEBI:128753"/>
        <dbReference type="EC" id="1.17.7.3"/>
    </reaction>
</comment>
<comment type="cofactor">
    <cofactor evidence="1">
        <name>[4Fe-4S] cluster</name>
        <dbReference type="ChEBI" id="CHEBI:49883"/>
    </cofactor>
    <text evidence="1">Binds 1 [4Fe-4S] cluster.</text>
</comment>
<comment type="pathway">
    <text evidence="1">Isoprenoid biosynthesis; isopentenyl diphosphate biosynthesis via DXP pathway; isopentenyl diphosphate from 1-deoxy-D-xylulose 5-phosphate: step 5/6.</text>
</comment>
<comment type="similarity">
    <text evidence="1">Belongs to the IspG family.</text>
</comment>
<accession>Q62JW4</accession>
<gene>
    <name evidence="1" type="primary">ispG</name>
    <name type="ordered locus">BMA1345</name>
</gene>
<feature type="chain" id="PRO_0000190551" description="4-hydroxy-3-methylbut-2-en-1-yl diphosphate synthase (flavodoxin)">
    <location>
        <begin position="1"/>
        <end position="434"/>
    </location>
</feature>
<feature type="region of interest" description="Disordered" evidence="2">
    <location>
        <begin position="1"/>
        <end position="20"/>
    </location>
</feature>
<feature type="compositionally biased region" description="Polar residues" evidence="2">
    <location>
        <begin position="1"/>
        <end position="15"/>
    </location>
</feature>
<feature type="binding site" evidence="1">
    <location>
        <position position="322"/>
    </location>
    <ligand>
        <name>[4Fe-4S] cluster</name>
        <dbReference type="ChEBI" id="CHEBI:49883"/>
    </ligand>
</feature>
<feature type="binding site" evidence="1">
    <location>
        <position position="325"/>
    </location>
    <ligand>
        <name>[4Fe-4S] cluster</name>
        <dbReference type="ChEBI" id="CHEBI:49883"/>
    </ligand>
</feature>
<feature type="binding site" evidence="1">
    <location>
        <position position="368"/>
    </location>
    <ligand>
        <name>[4Fe-4S] cluster</name>
        <dbReference type="ChEBI" id="CHEBI:49883"/>
    </ligand>
</feature>
<feature type="binding site" evidence="1">
    <location>
        <position position="375"/>
    </location>
    <ligand>
        <name>[4Fe-4S] cluster</name>
        <dbReference type="ChEBI" id="CHEBI:49883"/>
    </ligand>
</feature>
<name>ISPG_BURMA</name>
<proteinExistence type="inferred from homology"/>
<reference key="1">
    <citation type="journal article" date="2004" name="Proc. Natl. Acad. Sci. U.S.A.">
        <title>Structural flexibility in the Burkholderia mallei genome.</title>
        <authorList>
            <person name="Nierman W.C."/>
            <person name="DeShazer D."/>
            <person name="Kim H.S."/>
            <person name="Tettelin H."/>
            <person name="Nelson K.E."/>
            <person name="Feldblyum T.V."/>
            <person name="Ulrich R.L."/>
            <person name="Ronning C.M."/>
            <person name="Brinkac L.M."/>
            <person name="Daugherty S.C."/>
            <person name="Davidsen T.D."/>
            <person name="DeBoy R.T."/>
            <person name="Dimitrov G."/>
            <person name="Dodson R.J."/>
            <person name="Durkin A.S."/>
            <person name="Gwinn M.L."/>
            <person name="Haft D.H."/>
            <person name="Khouri H.M."/>
            <person name="Kolonay J.F."/>
            <person name="Madupu R."/>
            <person name="Mohammoud Y."/>
            <person name="Nelson W.C."/>
            <person name="Radune D."/>
            <person name="Romero C.M."/>
            <person name="Sarria S."/>
            <person name="Selengut J."/>
            <person name="Shamblin C."/>
            <person name="Sullivan S.A."/>
            <person name="White O."/>
            <person name="Yu Y."/>
            <person name="Zafar N."/>
            <person name="Zhou L."/>
            <person name="Fraser C.M."/>
        </authorList>
    </citation>
    <scope>NUCLEOTIDE SEQUENCE [LARGE SCALE GENOMIC DNA]</scope>
    <source>
        <strain>ATCC 23344</strain>
    </source>
</reference>